<organism>
    <name type="scientific">Pisum sativum</name>
    <name type="common">Garden pea</name>
    <name type="synonym">Lathyrus oleraceus</name>
    <dbReference type="NCBI Taxonomy" id="3888"/>
    <lineage>
        <taxon>Eukaryota</taxon>
        <taxon>Viridiplantae</taxon>
        <taxon>Streptophyta</taxon>
        <taxon>Embryophyta</taxon>
        <taxon>Tracheophyta</taxon>
        <taxon>Spermatophyta</taxon>
        <taxon>Magnoliopsida</taxon>
        <taxon>eudicotyledons</taxon>
        <taxon>Gunneridae</taxon>
        <taxon>Pentapetalae</taxon>
        <taxon>rosids</taxon>
        <taxon>fabids</taxon>
        <taxon>Fabales</taxon>
        <taxon>Fabaceae</taxon>
        <taxon>Papilionoideae</taxon>
        <taxon>50 kb inversion clade</taxon>
        <taxon>NPAAA clade</taxon>
        <taxon>Hologalegina</taxon>
        <taxon>IRL clade</taxon>
        <taxon>Fabeae</taxon>
        <taxon>Pisum</taxon>
    </lineage>
</organism>
<accession>Q41011</accession>
<dbReference type="EMBL" id="X96555">
    <property type="protein sequence ID" value="CAA65391.1"/>
    <property type="molecule type" value="mRNA"/>
</dbReference>
<dbReference type="SMR" id="Q41011"/>
<dbReference type="GO" id="GO:0005737">
    <property type="term" value="C:cytoplasm"/>
    <property type="evidence" value="ECO:0007669"/>
    <property type="project" value="UniProtKB-SubCell"/>
</dbReference>
<dbReference type="GO" id="GO:0005525">
    <property type="term" value="F:GTP binding"/>
    <property type="evidence" value="ECO:0007669"/>
    <property type="project" value="UniProtKB-KW"/>
</dbReference>
<dbReference type="GO" id="GO:0003924">
    <property type="term" value="F:GTPase activity"/>
    <property type="evidence" value="ECO:0007669"/>
    <property type="project" value="InterPro"/>
</dbReference>
<dbReference type="GO" id="GO:0003746">
    <property type="term" value="F:translation elongation factor activity"/>
    <property type="evidence" value="ECO:0007669"/>
    <property type="project" value="UniProtKB-KW"/>
</dbReference>
<dbReference type="CDD" id="cd01883">
    <property type="entry name" value="EF1_alpha"/>
    <property type="match status" value="1"/>
</dbReference>
<dbReference type="CDD" id="cd03693">
    <property type="entry name" value="EF1_alpha_II"/>
    <property type="match status" value="1"/>
</dbReference>
<dbReference type="CDD" id="cd03705">
    <property type="entry name" value="EF1_alpha_III"/>
    <property type="match status" value="1"/>
</dbReference>
<dbReference type="FunFam" id="2.40.30.10:FF:000003">
    <property type="entry name" value="Elongation factor 1-alpha"/>
    <property type="match status" value="1"/>
</dbReference>
<dbReference type="FunFam" id="2.40.30.10:FF:000005">
    <property type="entry name" value="Elongation factor 1-alpha"/>
    <property type="match status" value="1"/>
</dbReference>
<dbReference type="FunFam" id="3.40.50.300:FF:000255">
    <property type="entry name" value="Elongation factor 1-alpha"/>
    <property type="match status" value="1"/>
</dbReference>
<dbReference type="Gene3D" id="3.40.50.300">
    <property type="entry name" value="P-loop containing nucleotide triphosphate hydrolases"/>
    <property type="match status" value="1"/>
</dbReference>
<dbReference type="Gene3D" id="2.40.30.10">
    <property type="entry name" value="Translation factors"/>
    <property type="match status" value="2"/>
</dbReference>
<dbReference type="InterPro" id="IPR004161">
    <property type="entry name" value="EFTu-like_2"/>
</dbReference>
<dbReference type="InterPro" id="IPR031157">
    <property type="entry name" value="G_TR_CS"/>
</dbReference>
<dbReference type="InterPro" id="IPR054696">
    <property type="entry name" value="GTP-eEF1A_C"/>
</dbReference>
<dbReference type="InterPro" id="IPR027417">
    <property type="entry name" value="P-loop_NTPase"/>
</dbReference>
<dbReference type="InterPro" id="IPR000795">
    <property type="entry name" value="T_Tr_GTP-bd_dom"/>
</dbReference>
<dbReference type="InterPro" id="IPR050100">
    <property type="entry name" value="TRAFAC_GTPase_members"/>
</dbReference>
<dbReference type="InterPro" id="IPR009000">
    <property type="entry name" value="Transl_B-barrel_sf"/>
</dbReference>
<dbReference type="InterPro" id="IPR009001">
    <property type="entry name" value="Transl_elong_EF1A/Init_IF2_C"/>
</dbReference>
<dbReference type="InterPro" id="IPR004539">
    <property type="entry name" value="Transl_elong_EF1A_euk/arc"/>
</dbReference>
<dbReference type="NCBIfam" id="TIGR00483">
    <property type="entry name" value="EF-1_alpha"/>
    <property type="match status" value="1"/>
</dbReference>
<dbReference type="NCBIfam" id="NF008969">
    <property type="entry name" value="PRK12317.1"/>
    <property type="match status" value="1"/>
</dbReference>
<dbReference type="PANTHER" id="PTHR23115">
    <property type="entry name" value="TRANSLATION FACTOR"/>
    <property type="match status" value="1"/>
</dbReference>
<dbReference type="Pfam" id="PF22594">
    <property type="entry name" value="GTP-eEF1A_C"/>
    <property type="match status" value="1"/>
</dbReference>
<dbReference type="Pfam" id="PF00009">
    <property type="entry name" value="GTP_EFTU"/>
    <property type="match status" value="1"/>
</dbReference>
<dbReference type="Pfam" id="PF03144">
    <property type="entry name" value="GTP_EFTU_D2"/>
    <property type="match status" value="1"/>
</dbReference>
<dbReference type="PRINTS" id="PR00315">
    <property type="entry name" value="ELONGATNFCT"/>
</dbReference>
<dbReference type="SUPFAM" id="SSF50465">
    <property type="entry name" value="EF-Tu/eEF-1alpha/eIF2-gamma C-terminal domain"/>
    <property type="match status" value="1"/>
</dbReference>
<dbReference type="SUPFAM" id="SSF52540">
    <property type="entry name" value="P-loop containing nucleoside triphosphate hydrolases"/>
    <property type="match status" value="1"/>
</dbReference>
<dbReference type="SUPFAM" id="SSF50447">
    <property type="entry name" value="Translation proteins"/>
    <property type="match status" value="1"/>
</dbReference>
<dbReference type="PROSITE" id="PS00301">
    <property type="entry name" value="G_TR_1"/>
    <property type="match status" value="1"/>
</dbReference>
<dbReference type="PROSITE" id="PS51722">
    <property type="entry name" value="G_TR_2"/>
    <property type="match status" value="1"/>
</dbReference>
<evidence type="ECO:0000250" key="1"/>
<evidence type="ECO:0000250" key="2">
    <source>
        <dbReference type="UniProtKB" id="Q8GTY0"/>
    </source>
</evidence>
<evidence type="ECO:0000255" key="3">
    <source>
        <dbReference type="PROSITE-ProRule" id="PRU01059"/>
    </source>
</evidence>
<sequence>MGKEKVHINIVVIGHVDSGKSTTTVHVIYKLGGIDKRVIERFEKEADEMNKRSFKYAWLLDKLKAERERGITIDIALLKFETTKYYSTVMDAPGHRDFIKNMITGTSQADCAVLIIDSTTGGFEAGISKDGQTREHALLAFTLGVKQMICCCNKMDATTPKYSKGRYEEIVKEVSSYLKEVGYNPDKIPFVPISGFEGDNMIERSTNLDWYKGPTLLDALDNINEPKRPSDKPLRLPLQDVYKIGGIGTVPVGRVETGVVKPGMLVTFAPTGLTTEVKSVEMHHEALTEALPGDNVRFNVKNVAVKDLKHGLVASNSKDDPAKDAANFTSQVIIMNHPGQIGNGYAPVLDCHTSHIAVKFAELITKIDRRSGKEIEKEPKFLKNGDAGMVKMIPTKPMVVETFAEYPPLGRFAVRDMRQTVAVGVIKSVEKKDPTGAKVTKAAAKKK</sequence>
<name>EF1A_PEA</name>
<keyword id="KW-0963">Cytoplasm</keyword>
<keyword id="KW-0251">Elongation factor</keyword>
<keyword id="KW-0342">GTP-binding</keyword>
<keyword id="KW-0488">Methylation</keyword>
<keyword id="KW-0547">Nucleotide-binding</keyword>
<keyword id="KW-0597">Phosphoprotein</keyword>
<keyword id="KW-0648">Protein biosynthesis</keyword>
<proteinExistence type="evidence at transcript level"/>
<protein>
    <recommendedName>
        <fullName>Elongation factor 1-alpha</fullName>
        <shortName>EF-1-alpha</shortName>
    </recommendedName>
</protein>
<feature type="chain" id="PRO_0000090942" description="Elongation factor 1-alpha">
    <location>
        <begin position="1"/>
        <end position="447"/>
    </location>
</feature>
<feature type="domain" description="tr-type G" evidence="3">
    <location>
        <begin position="5"/>
        <end position="230"/>
    </location>
</feature>
<feature type="region of interest" description="G1" evidence="3">
    <location>
        <begin position="14"/>
        <end position="21"/>
    </location>
</feature>
<feature type="region of interest" description="G2" evidence="3">
    <location>
        <begin position="70"/>
        <end position="74"/>
    </location>
</feature>
<feature type="region of interest" description="G3" evidence="3">
    <location>
        <begin position="91"/>
        <end position="94"/>
    </location>
</feature>
<feature type="region of interest" description="G4" evidence="3">
    <location>
        <begin position="153"/>
        <end position="156"/>
    </location>
</feature>
<feature type="region of interest" description="G5" evidence="3">
    <location>
        <begin position="194"/>
        <end position="196"/>
    </location>
</feature>
<feature type="binding site" evidence="1">
    <location>
        <begin position="14"/>
        <end position="21"/>
    </location>
    <ligand>
        <name>GTP</name>
        <dbReference type="ChEBI" id="CHEBI:37565"/>
    </ligand>
</feature>
<feature type="binding site" evidence="1">
    <location>
        <begin position="91"/>
        <end position="95"/>
    </location>
    <ligand>
        <name>GTP</name>
        <dbReference type="ChEBI" id="CHEBI:37565"/>
    </ligand>
</feature>
<feature type="binding site" evidence="1">
    <location>
        <begin position="153"/>
        <end position="156"/>
    </location>
    <ligand>
        <name>GTP</name>
        <dbReference type="ChEBI" id="CHEBI:37565"/>
    </ligand>
</feature>
<feature type="modified residue" description="N6,N6-dimethyllysine" evidence="2">
    <location>
        <position position="55"/>
    </location>
</feature>
<feature type="modified residue" description="N6,N6,N6-trimethyllysine" evidence="2">
    <location>
        <position position="79"/>
    </location>
</feature>
<feature type="modified residue" description="N6,N6,N6-trimethyllysine" evidence="2">
    <location>
        <position position="187"/>
    </location>
</feature>
<feature type="modified residue" description="N6-methyllysine" evidence="2">
    <location>
        <position position="261"/>
    </location>
</feature>
<feature type="modified residue" description="5-glutamyl glycerylphosphorylethanolamine" evidence="1">
    <location>
        <position position="289"/>
    </location>
</feature>
<feature type="modified residue" description="N6,N6,N6-trimethyllysine" evidence="2">
    <location>
        <position position="306"/>
    </location>
</feature>
<feature type="modified residue" description="5-glutamyl glycerylphosphorylethanolamine" evidence="1">
    <location>
        <position position="362"/>
    </location>
</feature>
<feature type="modified residue" description="N6,N6,N6-trimethyllysine" evidence="2">
    <location>
        <position position="396"/>
    </location>
</feature>
<reference key="1">
    <citation type="submission" date="1996-03" db="EMBL/GenBank/DDBJ databases">
        <authorList>
            <person name="Ling S."/>
            <person name="Chen X."/>
            <person name="Zhu Y."/>
        </authorList>
    </citation>
    <scope>NUCLEOTIDE SEQUENCE [MRNA]</scope>
</reference>
<comment type="function">
    <text>This protein promotes the GTP-dependent binding of aminoacyl-tRNA to the A-site of ribosomes during protein biosynthesis.</text>
</comment>
<comment type="subcellular location">
    <subcellularLocation>
        <location>Cytoplasm</location>
    </subcellularLocation>
</comment>
<comment type="similarity">
    <text evidence="3">Belongs to the TRAFAC class translation factor GTPase superfamily. Classic translation factor GTPase family. EF-Tu/EF-1A subfamily.</text>
</comment>